<comment type="function">
    <text evidence="1">Catalyzes the complicated ring closure reaction between the two acyclic compounds 1-deoxy-D-xylulose-5-phosphate (DXP) and 3-amino-2-oxopropyl phosphate (1-amino-acetone-3-phosphate or AAP) to form pyridoxine 5'-phosphate (PNP) and inorganic phosphate.</text>
</comment>
<comment type="catalytic activity">
    <reaction evidence="1">
        <text>3-amino-2-oxopropyl phosphate + 1-deoxy-D-xylulose 5-phosphate = pyridoxine 5'-phosphate + phosphate + 2 H2O + H(+)</text>
        <dbReference type="Rhea" id="RHEA:15265"/>
        <dbReference type="ChEBI" id="CHEBI:15377"/>
        <dbReference type="ChEBI" id="CHEBI:15378"/>
        <dbReference type="ChEBI" id="CHEBI:43474"/>
        <dbReference type="ChEBI" id="CHEBI:57279"/>
        <dbReference type="ChEBI" id="CHEBI:57792"/>
        <dbReference type="ChEBI" id="CHEBI:58589"/>
        <dbReference type="EC" id="2.6.99.2"/>
    </reaction>
</comment>
<comment type="pathway">
    <text evidence="1">Cofactor biosynthesis; pyridoxine 5'-phosphate biosynthesis; pyridoxine 5'-phosphate from D-erythrose 4-phosphate: step 5/5.</text>
</comment>
<comment type="subunit">
    <text evidence="1">Homooctamer; tetramer of dimers.</text>
</comment>
<comment type="subcellular location">
    <subcellularLocation>
        <location evidence="1">Cytoplasm</location>
    </subcellularLocation>
</comment>
<comment type="similarity">
    <text evidence="1">Belongs to the PNP synthase family.</text>
</comment>
<evidence type="ECO:0000255" key="1">
    <source>
        <dbReference type="HAMAP-Rule" id="MF_00279"/>
    </source>
</evidence>
<organism>
    <name type="scientific">Christiangramia forsetii (strain DSM 17595 / CGMCC 1.15422 / KT0803)</name>
    <name type="common">Gramella forsetii</name>
    <dbReference type="NCBI Taxonomy" id="411154"/>
    <lineage>
        <taxon>Bacteria</taxon>
        <taxon>Pseudomonadati</taxon>
        <taxon>Bacteroidota</taxon>
        <taxon>Flavobacteriia</taxon>
        <taxon>Flavobacteriales</taxon>
        <taxon>Flavobacteriaceae</taxon>
        <taxon>Christiangramia</taxon>
    </lineage>
</organism>
<keyword id="KW-0963">Cytoplasm</keyword>
<keyword id="KW-0664">Pyridoxine biosynthesis</keyword>
<keyword id="KW-0808">Transferase</keyword>
<accession>A0LXW0</accession>
<reference key="1">
    <citation type="journal article" date="2006" name="Environ. Microbiol.">
        <title>Whole genome analysis of the marine Bacteroidetes'Gramella forsetii' reveals adaptations to degradation of polymeric organic matter.</title>
        <authorList>
            <person name="Bauer M."/>
            <person name="Kube M."/>
            <person name="Teeling H."/>
            <person name="Richter M."/>
            <person name="Lombardot T."/>
            <person name="Allers E."/>
            <person name="Wuerdemann C.A."/>
            <person name="Quast C."/>
            <person name="Kuhl H."/>
            <person name="Knaust F."/>
            <person name="Woebken D."/>
            <person name="Bischof K."/>
            <person name="Mussmann M."/>
            <person name="Choudhuri J.V."/>
            <person name="Meyer F."/>
            <person name="Reinhardt R."/>
            <person name="Amann R.I."/>
            <person name="Gloeckner F.O."/>
        </authorList>
    </citation>
    <scope>NUCLEOTIDE SEQUENCE [LARGE SCALE GENOMIC DNA]</scope>
    <source>
        <strain>DSM 17595 / CGMCC 1.15422 / KT0803</strain>
    </source>
</reference>
<name>PDXJ_CHRFK</name>
<gene>
    <name evidence="1" type="primary">pdxJ</name>
    <name type="ordered locus">GFO_0217</name>
</gene>
<proteinExistence type="inferred from homology"/>
<feature type="chain" id="PRO_1000022373" description="Pyridoxine 5'-phosphate synthase">
    <location>
        <begin position="1"/>
        <end position="237"/>
    </location>
</feature>
<feature type="active site" description="Proton acceptor" evidence="1">
    <location>
        <position position="43"/>
    </location>
</feature>
<feature type="active site" description="Proton acceptor" evidence="1">
    <location>
        <position position="70"/>
    </location>
</feature>
<feature type="active site" description="Proton donor" evidence="1">
    <location>
        <position position="190"/>
    </location>
</feature>
<feature type="binding site" evidence="1">
    <location>
        <position position="7"/>
    </location>
    <ligand>
        <name>3-amino-2-oxopropyl phosphate</name>
        <dbReference type="ChEBI" id="CHEBI:57279"/>
    </ligand>
</feature>
<feature type="binding site" evidence="1">
    <location>
        <position position="18"/>
    </location>
    <ligand>
        <name>3-amino-2-oxopropyl phosphate</name>
        <dbReference type="ChEBI" id="CHEBI:57279"/>
    </ligand>
</feature>
<feature type="binding site" evidence="1">
    <location>
        <position position="45"/>
    </location>
    <ligand>
        <name>1-deoxy-D-xylulose 5-phosphate</name>
        <dbReference type="ChEBI" id="CHEBI:57792"/>
    </ligand>
</feature>
<feature type="binding site" evidence="1">
    <location>
        <position position="50"/>
    </location>
    <ligand>
        <name>1-deoxy-D-xylulose 5-phosphate</name>
        <dbReference type="ChEBI" id="CHEBI:57792"/>
    </ligand>
</feature>
<feature type="binding site" evidence="1">
    <location>
        <position position="100"/>
    </location>
    <ligand>
        <name>1-deoxy-D-xylulose 5-phosphate</name>
        <dbReference type="ChEBI" id="CHEBI:57792"/>
    </ligand>
</feature>
<feature type="binding site" evidence="1">
    <location>
        <position position="191"/>
    </location>
    <ligand>
        <name>3-amino-2-oxopropyl phosphate</name>
        <dbReference type="ChEBI" id="CHEBI:57279"/>
    </ligand>
</feature>
<feature type="binding site" evidence="1">
    <location>
        <begin position="213"/>
        <end position="214"/>
    </location>
    <ligand>
        <name>3-amino-2-oxopropyl phosphate</name>
        <dbReference type="ChEBI" id="CHEBI:57279"/>
    </ligand>
</feature>
<feature type="site" description="Transition state stabilizer" evidence="1">
    <location>
        <position position="151"/>
    </location>
</feature>
<protein>
    <recommendedName>
        <fullName evidence="1">Pyridoxine 5'-phosphate synthase</fullName>
        <shortName evidence="1">PNP synthase</shortName>
        <ecNumber evidence="1">2.6.99.2</ecNumber>
    </recommendedName>
</protein>
<dbReference type="EC" id="2.6.99.2" evidence="1"/>
<dbReference type="EMBL" id="CU207366">
    <property type="protein sequence ID" value="CAL65205.1"/>
    <property type="molecule type" value="Genomic_DNA"/>
</dbReference>
<dbReference type="RefSeq" id="WP_011708143.1">
    <property type="nucleotide sequence ID" value="NC_008571.1"/>
</dbReference>
<dbReference type="SMR" id="A0LXW0"/>
<dbReference type="STRING" id="411154.GFO_0217"/>
<dbReference type="KEGG" id="gfo:GFO_0217"/>
<dbReference type="eggNOG" id="COG0854">
    <property type="taxonomic scope" value="Bacteria"/>
</dbReference>
<dbReference type="HOGENOM" id="CLU_074563_1_0_10"/>
<dbReference type="OrthoDB" id="9806590at2"/>
<dbReference type="UniPathway" id="UPA00244">
    <property type="reaction ID" value="UER00313"/>
</dbReference>
<dbReference type="Proteomes" id="UP000000755">
    <property type="component" value="Chromosome"/>
</dbReference>
<dbReference type="GO" id="GO:0005829">
    <property type="term" value="C:cytosol"/>
    <property type="evidence" value="ECO:0007669"/>
    <property type="project" value="TreeGrafter"/>
</dbReference>
<dbReference type="GO" id="GO:0033856">
    <property type="term" value="F:pyridoxine 5'-phosphate synthase activity"/>
    <property type="evidence" value="ECO:0007669"/>
    <property type="project" value="UniProtKB-EC"/>
</dbReference>
<dbReference type="GO" id="GO:0008615">
    <property type="term" value="P:pyridoxine biosynthetic process"/>
    <property type="evidence" value="ECO:0007669"/>
    <property type="project" value="UniProtKB-UniRule"/>
</dbReference>
<dbReference type="CDD" id="cd00003">
    <property type="entry name" value="PNPsynthase"/>
    <property type="match status" value="1"/>
</dbReference>
<dbReference type="FunFam" id="3.20.20.70:FF:000150">
    <property type="entry name" value="Pyridoxine 5'-phosphate synthase"/>
    <property type="match status" value="1"/>
</dbReference>
<dbReference type="Gene3D" id="3.20.20.70">
    <property type="entry name" value="Aldolase class I"/>
    <property type="match status" value="1"/>
</dbReference>
<dbReference type="HAMAP" id="MF_00279">
    <property type="entry name" value="PdxJ"/>
    <property type="match status" value="1"/>
</dbReference>
<dbReference type="InterPro" id="IPR013785">
    <property type="entry name" value="Aldolase_TIM"/>
</dbReference>
<dbReference type="InterPro" id="IPR004569">
    <property type="entry name" value="PyrdxlP_synth_PdxJ"/>
</dbReference>
<dbReference type="InterPro" id="IPR036130">
    <property type="entry name" value="Pyridoxine-5'_phos_synth"/>
</dbReference>
<dbReference type="NCBIfam" id="TIGR00559">
    <property type="entry name" value="pdxJ"/>
    <property type="match status" value="1"/>
</dbReference>
<dbReference type="NCBIfam" id="NF003625">
    <property type="entry name" value="PRK05265.1-3"/>
    <property type="match status" value="1"/>
</dbReference>
<dbReference type="NCBIfam" id="NF003626">
    <property type="entry name" value="PRK05265.1-4"/>
    <property type="match status" value="1"/>
</dbReference>
<dbReference type="NCBIfam" id="NF003627">
    <property type="entry name" value="PRK05265.1-5"/>
    <property type="match status" value="1"/>
</dbReference>
<dbReference type="PANTHER" id="PTHR30456">
    <property type="entry name" value="PYRIDOXINE 5'-PHOSPHATE SYNTHASE"/>
    <property type="match status" value="1"/>
</dbReference>
<dbReference type="PANTHER" id="PTHR30456:SF0">
    <property type="entry name" value="PYRIDOXINE 5'-PHOSPHATE SYNTHASE"/>
    <property type="match status" value="1"/>
</dbReference>
<dbReference type="Pfam" id="PF03740">
    <property type="entry name" value="PdxJ"/>
    <property type="match status" value="1"/>
</dbReference>
<dbReference type="SUPFAM" id="SSF63892">
    <property type="entry name" value="Pyridoxine 5'-phosphate synthase"/>
    <property type="match status" value="1"/>
</dbReference>
<sequence length="237" mass="26304">MTKLSVNINKIATLRNARGGDVPNVLEAAKNIESFGAEGITVHPRPDERHIRYADARELKPVLNTEFNIEGKPIQQFIDLVLEVKPAQVTLVPDAENAITSDSGWDTVKHRDYLKEVIAEFKANGIRTSIFVDPVKKMIEGAAETGSDRIELYTESFAVDFEKGNSNAVKPYAECAKIAHELGLGINAGHDLSLKNINYFKENVPYLDEVSIGHALISEALYLGLEKTIQQYLKLLK</sequence>